<proteinExistence type="inferred from homology"/>
<name>RL35_PELPB</name>
<keyword id="KW-1185">Reference proteome</keyword>
<keyword id="KW-0687">Ribonucleoprotein</keyword>
<keyword id="KW-0689">Ribosomal protein</keyword>
<organism>
    <name type="scientific">Pelodictyon phaeoclathratiforme (strain DSM 5477 / BU-1)</name>
    <dbReference type="NCBI Taxonomy" id="324925"/>
    <lineage>
        <taxon>Bacteria</taxon>
        <taxon>Pseudomonadati</taxon>
        <taxon>Chlorobiota</taxon>
        <taxon>Chlorobiia</taxon>
        <taxon>Chlorobiales</taxon>
        <taxon>Chlorobiaceae</taxon>
        <taxon>Chlorobium/Pelodictyon group</taxon>
        <taxon>Pelodictyon</taxon>
    </lineage>
</organism>
<comment type="similarity">
    <text evidence="1">Belongs to the bacterial ribosomal protein bL35 family.</text>
</comment>
<sequence length="64" mass="7463">MPKMKSHRGACKRFKTTSSGKIKRERMNGSHNLEKKNSKRCRRLHQTALLEGLKAKQIKRMIQA</sequence>
<reference key="1">
    <citation type="submission" date="2008-06" db="EMBL/GenBank/DDBJ databases">
        <title>Complete sequence of Pelodictyon phaeoclathratiforme BU-1.</title>
        <authorList>
            <consortium name="US DOE Joint Genome Institute"/>
            <person name="Lucas S."/>
            <person name="Copeland A."/>
            <person name="Lapidus A."/>
            <person name="Glavina del Rio T."/>
            <person name="Dalin E."/>
            <person name="Tice H."/>
            <person name="Bruce D."/>
            <person name="Goodwin L."/>
            <person name="Pitluck S."/>
            <person name="Schmutz J."/>
            <person name="Larimer F."/>
            <person name="Land M."/>
            <person name="Hauser L."/>
            <person name="Kyrpides N."/>
            <person name="Mikhailova N."/>
            <person name="Liu Z."/>
            <person name="Li T."/>
            <person name="Zhao F."/>
            <person name="Overmann J."/>
            <person name="Bryant D.A."/>
            <person name="Richardson P."/>
        </authorList>
    </citation>
    <scope>NUCLEOTIDE SEQUENCE [LARGE SCALE GENOMIC DNA]</scope>
    <source>
        <strain>DSM 5477 / BU-1</strain>
    </source>
</reference>
<protein>
    <recommendedName>
        <fullName evidence="1">Large ribosomal subunit protein bL35</fullName>
    </recommendedName>
    <alternativeName>
        <fullName evidence="2">50S ribosomal protein L35</fullName>
    </alternativeName>
</protein>
<gene>
    <name evidence="1" type="primary">rpmI</name>
    <name type="ordered locus">Ppha_0174</name>
</gene>
<evidence type="ECO:0000255" key="1">
    <source>
        <dbReference type="HAMAP-Rule" id="MF_00514"/>
    </source>
</evidence>
<evidence type="ECO:0000305" key="2"/>
<feature type="chain" id="PRO_1000127386" description="Large ribosomal subunit protein bL35">
    <location>
        <begin position="1"/>
        <end position="64"/>
    </location>
</feature>
<accession>B4SB91</accession>
<dbReference type="EMBL" id="CP001110">
    <property type="protein sequence ID" value="ACF42512.1"/>
    <property type="molecule type" value="Genomic_DNA"/>
</dbReference>
<dbReference type="RefSeq" id="WP_012507010.1">
    <property type="nucleotide sequence ID" value="NC_011060.1"/>
</dbReference>
<dbReference type="SMR" id="B4SB91"/>
<dbReference type="STRING" id="324925.Ppha_0174"/>
<dbReference type="KEGG" id="pph:Ppha_0174"/>
<dbReference type="eggNOG" id="COG0291">
    <property type="taxonomic scope" value="Bacteria"/>
</dbReference>
<dbReference type="HOGENOM" id="CLU_169643_4_3_10"/>
<dbReference type="OrthoDB" id="47476at2"/>
<dbReference type="Proteomes" id="UP000002724">
    <property type="component" value="Chromosome"/>
</dbReference>
<dbReference type="GO" id="GO:0022625">
    <property type="term" value="C:cytosolic large ribosomal subunit"/>
    <property type="evidence" value="ECO:0007669"/>
    <property type="project" value="TreeGrafter"/>
</dbReference>
<dbReference type="GO" id="GO:0003735">
    <property type="term" value="F:structural constituent of ribosome"/>
    <property type="evidence" value="ECO:0007669"/>
    <property type="project" value="InterPro"/>
</dbReference>
<dbReference type="GO" id="GO:0006412">
    <property type="term" value="P:translation"/>
    <property type="evidence" value="ECO:0007669"/>
    <property type="project" value="UniProtKB-UniRule"/>
</dbReference>
<dbReference type="FunFam" id="4.10.410.60:FF:000001">
    <property type="entry name" value="50S ribosomal protein L35"/>
    <property type="match status" value="1"/>
</dbReference>
<dbReference type="Gene3D" id="4.10.410.60">
    <property type="match status" value="1"/>
</dbReference>
<dbReference type="HAMAP" id="MF_00514">
    <property type="entry name" value="Ribosomal_bL35"/>
    <property type="match status" value="1"/>
</dbReference>
<dbReference type="InterPro" id="IPR001706">
    <property type="entry name" value="Ribosomal_bL35"/>
</dbReference>
<dbReference type="InterPro" id="IPR021137">
    <property type="entry name" value="Ribosomal_bL35-like"/>
</dbReference>
<dbReference type="InterPro" id="IPR018265">
    <property type="entry name" value="Ribosomal_bL35_CS"/>
</dbReference>
<dbReference type="InterPro" id="IPR037229">
    <property type="entry name" value="Ribosomal_bL35_sf"/>
</dbReference>
<dbReference type="NCBIfam" id="TIGR00001">
    <property type="entry name" value="rpmI_bact"/>
    <property type="match status" value="1"/>
</dbReference>
<dbReference type="PANTHER" id="PTHR33343">
    <property type="entry name" value="54S RIBOSOMAL PROTEIN BL35M"/>
    <property type="match status" value="1"/>
</dbReference>
<dbReference type="PANTHER" id="PTHR33343:SF1">
    <property type="entry name" value="LARGE RIBOSOMAL SUBUNIT PROTEIN BL35M"/>
    <property type="match status" value="1"/>
</dbReference>
<dbReference type="Pfam" id="PF01632">
    <property type="entry name" value="Ribosomal_L35p"/>
    <property type="match status" value="1"/>
</dbReference>
<dbReference type="PRINTS" id="PR00064">
    <property type="entry name" value="RIBOSOMALL35"/>
</dbReference>
<dbReference type="SUPFAM" id="SSF143034">
    <property type="entry name" value="L35p-like"/>
    <property type="match status" value="1"/>
</dbReference>
<dbReference type="PROSITE" id="PS00936">
    <property type="entry name" value="RIBOSOMAL_L35"/>
    <property type="match status" value="1"/>
</dbReference>